<protein>
    <recommendedName>
        <fullName evidence="7">BAG-associated GRAM protein 1</fullName>
    </recommendedName>
</protein>
<comment type="function">
    <text evidence="6">Involved in proteolytic processing of BAG6.</text>
</comment>
<comment type="subunit">
    <text evidence="6">Interacts with BAG6 and APCB1.</text>
</comment>
<comment type="subcellular location">
    <subcellularLocation>
        <location evidence="1">Membrane</location>
        <topology evidence="1">Single-pass membrane protein</topology>
    </subcellularLocation>
</comment>
<comment type="induction">
    <text evidence="5">Up-regulated by cold, drought, salinity, abscisic acid and fungal infection.</text>
</comment>
<comment type="disruption phenotype">
    <text evidence="6">Enhanced susceptibility to B.cinerea and permissive fungal growth.</text>
</comment>
<comment type="sequence caution" evidence="8">
    <conflict type="erroneous gene model prediction">
        <sequence resource="EMBL-CDS" id="CAB75463"/>
    </conflict>
</comment>
<accession>Q8W4D4</accession>
<accession>Q9M1A2</accession>
<gene>
    <name evidence="7" type="primary">BAGP1</name>
    <name evidence="9" type="ordered locus">At3g59660</name>
    <name evidence="11" type="ORF">T16L24.21</name>
</gene>
<proteinExistence type="evidence at protein level"/>
<name>BAGP1_ARATH</name>
<feature type="chain" id="PRO_0000436004" description="BAG-associated GRAM protein 1">
    <location>
        <begin position="1"/>
        <end position="594"/>
    </location>
</feature>
<feature type="transmembrane region" description="Helical" evidence="1">
    <location>
        <begin position="8"/>
        <end position="28"/>
    </location>
</feature>
<feature type="domain" description="C2" evidence="2">
    <location>
        <begin position="67"/>
        <end position="179"/>
    </location>
</feature>
<feature type="domain" description="GRAM" evidence="1">
    <location>
        <begin position="231"/>
        <end position="295"/>
    </location>
</feature>
<feature type="domain" description="VASt" evidence="3">
    <location>
        <begin position="399"/>
        <end position="572"/>
    </location>
</feature>
<feature type="region of interest" description="Disordered" evidence="4">
    <location>
        <begin position="571"/>
        <end position="594"/>
    </location>
</feature>
<feature type="compositionally biased region" description="Polar residues" evidence="4">
    <location>
        <begin position="584"/>
        <end position="594"/>
    </location>
</feature>
<reference key="1">
    <citation type="journal article" date="2000" name="Nature">
        <title>Sequence and analysis of chromosome 3 of the plant Arabidopsis thaliana.</title>
        <authorList>
            <person name="Salanoubat M."/>
            <person name="Lemcke K."/>
            <person name="Rieger M."/>
            <person name="Ansorge W."/>
            <person name="Unseld M."/>
            <person name="Fartmann B."/>
            <person name="Valle G."/>
            <person name="Bloecker H."/>
            <person name="Perez-Alonso M."/>
            <person name="Obermaier B."/>
            <person name="Delseny M."/>
            <person name="Boutry M."/>
            <person name="Grivell L.A."/>
            <person name="Mache R."/>
            <person name="Puigdomenech P."/>
            <person name="De Simone V."/>
            <person name="Choisne N."/>
            <person name="Artiguenave F."/>
            <person name="Robert C."/>
            <person name="Brottier P."/>
            <person name="Wincker P."/>
            <person name="Cattolico L."/>
            <person name="Weissenbach J."/>
            <person name="Saurin W."/>
            <person name="Quetier F."/>
            <person name="Schaefer M."/>
            <person name="Mueller-Auer S."/>
            <person name="Gabel C."/>
            <person name="Fuchs M."/>
            <person name="Benes V."/>
            <person name="Wurmbach E."/>
            <person name="Drzonek H."/>
            <person name="Erfle H."/>
            <person name="Jordan N."/>
            <person name="Bangert S."/>
            <person name="Wiedelmann R."/>
            <person name="Kranz H."/>
            <person name="Voss H."/>
            <person name="Holland R."/>
            <person name="Brandt P."/>
            <person name="Nyakatura G."/>
            <person name="Vezzi A."/>
            <person name="D'Angelo M."/>
            <person name="Pallavicini A."/>
            <person name="Toppo S."/>
            <person name="Simionati B."/>
            <person name="Conrad A."/>
            <person name="Hornischer K."/>
            <person name="Kauer G."/>
            <person name="Loehnert T.-H."/>
            <person name="Nordsiek G."/>
            <person name="Reichelt J."/>
            <person name="Scharfe M."/>
            <person name="Schoen O."/>
            <person name="Bargues M."/>
            <person name="Terol J."/>
            <person name="Climent J."/>
            <person name="Navarro P."/>
            <person name="Collado C."/>
            <person name="Perez-Perez A."/>
            <person name="Ottenwaelder B."/>
            <person name="Duchemin D."/>
            <person name="Cooke R."/>
            <person name="Laudie M."/>
            <person name="Berger-Llauro C."/>
            <person name="Purnelle B."/>
            <person name="Masuy D."/>
            <person name="de Haan M."/>
            <person name="Maarse A.C."/>
            <person name="Alcaraz J.-P."/>
            <person name="Cottet A."/>
            <person name="Casacuberta E."/>
            <person name="Monfort A."/>
            <person name="Argiriou A."/>
            <person name="Flores M."/>
            <person name="Liguori R."/>
            <person name="Vitale D."/>
            <person name="Mannhaupt G."/>
            <person name="Haase D."/>
            <person name="Schoof H."/>
            <person name="Rudd S."/>
            <person name="Zaccaria P."/>
            <person name="Mewes H.-W."/>
            <person name="Mayer K.F.X."/>
            <person name="Kaul S."/>
            <person name="Town C.D."/>
            <person name="Koo H.L."/>
            <person name="Tallon L.J."/>
            <person name="Jenkins J."/>
            <person name="Rooney T."/>
            <person name="Rizzo M."/>
            <person name="Walts A."/>
            <person name="Utterback T."/>
            <person name="Fujii C.Y."/>
            <person name="Shea T.P."/>
            <person name="Creasy T.H."/>
            <person name="Haas B."/>
            <person name="Maiti R."/>
            <person name="Wu D."/>
            <person name="Peterson J."/>
            <person name="Van Aken S."/>
            <person name="Pai G."/>
            <person name="Militscher J."/>
            <person name="Sellers P."/>
            <person name="Gill J.E."/>
            <person name="Feldblyum T.V."/>
            <person name="Preuss D."/>
            <person name="Lin X."/>
            <person name="Nierman W.C."/>
            <person name="Salzberg S.L."/>
            <person name="White O."/>
            <person name="Venter J.C."/>
            <person name="Fraser C.M."/>
            <person name="Kaneko T."/>
            <person name="Nakamura Y."/>
            <person name="Sato S."/>
            <person name="Kato T."/>
            <person name="Asamizu E."/>
            <person name="Sasamoto S."/>
            <person name="Kimura T."/>
            <person name="Idesawa K."/>
            <person name="Kawashima K."/>
            <person name="Kishida Y."/>
            <person name="Kiyokawa C."/>
            <person name="Kohara M."/>
            <person name="Matsumoto M."/>
            <person name="Matsuno A."/>
            <person name="Muraki A."/>
            <person name="Nakayama S."/>
            <person name="Nakazaki N."/>
            <person name="Shinpo S."/>
            <person name="Takeuchi C."/>
            <person name="Wada T."/>
            <person name="Watanabe A."/>
            <person name="Yamada M."/>
            <person name="Yasuda M."/>
            <person name="Tabata S."/>
        </authorList>
    </citation>
    <scope>NUCLEOTIDE SEQUENCE [LARGE SCALE GENOMIC DNA]</scope>
    <source>
        <strain>cv. Columbia</strain>
    </source>
</reference>
<reference key="2">
    <citation type="journal article" date="2017" name="Plant J.">
        <title>Araport11: a complete reannotation of the Arabidopsis thaliana reference genome.</title>
        <authorList>
            <person name="Cheng C.Y."/>
            <person name="Krishnakumar V."/>
            <person name="Chan A.P."/>
            <person name="Thibaud-Nissen F."/>
            <person name="Schobel S."/>
            <person name="Town C.D."/>
        </authorList>
    </citation>
    <scope>GENOME REANNOTATION</scope>
    <source>
        <strain>cv. Columbia</strain>
    </source>
</reference>
<reference key="3">
    <citation type="journal article" date="2003" name="Science">
        <title>Empirical analysis of transcriptional activity in the Arabidopsis genome.</title>
        <authorList>
            <person name="Yamada K."/>
            <person name="Lim J."/>
            <person name="Dale J.M."/>
            <person name="Chen H."/>
            <person name="Shinn P."/>
            <person name="Palm C.J."/>
            <person name="Southwick A.M."/>
            <person name="Wu H.C."/>
            <person name="Kim C.J."/>
            <person name="Nguyen M."/>
            <person name="Pham P.K."/>
            <person name="Cheuk R.F."/>
            <person name="Karlin-Newmann G."/>
            <person name="Liu S.X."/>
            <person name="Lam B."/>
            <person name="Sakano H."/>
            <person name="Wu T."/>
            <person name="Yu G."/>
            <person name="Miranda M."/>
            <person name="Quach H.L."/>
            <person name="Tripp M."/>
            <person name="Chang C.H."/>
            <person name="Lee J.M."/>
            <person name="Toriumi M.J."/>
            <person name="Chan M.M."/>
            <person name="Tang C.C."/>
            <person name="Onodera C.S."/>
            <person name="Deng J.M."/>
            <person name="Akiyama K."/>
            <person name="Ansari Y."/>
            <person name="Arakawa T."/>
            <person name="Banh J."/>
            <person name="Banno F."/>
            <person name="Bowser L."/>
            <person name="Brooks S.Y."/>
            <person name="Carninci P."/>
            <person name="Chao Q."/>
            <person name="Choy N."/>
            <person name="Enju A."/>
            <person name="Goldsmith A.D."/>
            <person name="Gurjal M."/>
            <person name="Hansen N.F."/>
            <person name="Hayashizaki Y."/>
            <person name="Johnson-Hopson C."/>
            <person name="Hsuan V.W."/>
            <person name="Iida K."/>
            <person name="Karnes M."/>
            <person name="Khan S."/>
            <person name="Koesema E."/>
            <person name="Ishida J."/>
            <person name="Jiang P.X."/>
            <person name="Jones T."/>
            <person name="Kawai J."/>
            <person name="Kamiya A."/>
            <person name="Meyers C."/>
            <person name="Nakajima M."/>
            <person name="Narusaka M."/>
            <person name="Seki M."/>
            <person name="Sakurai T."/>
            <person name="Satou M."/>
            <person name="Tamse R."/>
            <person name="Vaysberg M."/>
            <person name="Wallender E.K."/>
            <person name="Wong C."/>
            <person name="Yamamura Y."/>
            <person name="Yuan S."/>
            <person name="Shinozaki K."/>
            <person name="Davis R.W."/>
            <person name="Theologis A."/>
            <person name="Ecker J.R."/>
        </authorList>
    </citation>
    <scope>NUCLEOTIDE SEQUENCE [LARGE SCALE MRNA]</scope>
    <source>
        <strain>cv. Columbia</strain>
    </source>
</reference>
<reference key="4">
    <citation type="journal article" date="2008" name="Dev. Biol.">
        <title>Comparative transcriptional profiling and evolutionary analysis of the GRAM domain family in eukaryotes.</title>
        <authorList>
            <person name="Jiang S.Y."/>
            <person name="Ramamoorthy R."/>
            <person name="Ramachandran S."/>
        </authorList>
    </citation>
    <scope>INDUCTION</scope>
</reference>
<reference key="5">
    <citation type="journal article" date="2016" name="Plant Cell">
        <title>Aspartyl protease-mediated cleavage of BAG6 is necessary for autophagy and fungal resistance in plants.</title>
        <authorList>
            <person name="Li Y."/>
            <person name="Kabbage M."/>
            <person name="Liu W."/>
            <person name="Dickman M.B."/>
        </authorList>
    </citation>
    <scope>FUNCTION</scope>
    <scope>DISRUPTION PHENOTYPE</scope>
    <scope>INTERACTION WITH BAG6 AND APCB1</scope>
</reference>
<evidence type="ECO:0000255" key="1"/>
<evidence type="ECO:0000255" key="2">
    <source>
        <dbReference type="PROSITE-ProRule" id="PRU00041"/>
    </source>
</evidence>
<evidence type="ECO:0000255" key="3">
    <source>
        <dbReference type="PROSITE-ProRule" id="PRU01114"/>
    </source>
</evidence>
<evidence type="ECO:0000256" key="4">
    <source>
        <dbReference type="SAM" id="MobiDB-lite"/>
    </source>
</evidence>
<evidence type="ECO:0000269" key="5">
    <source>
    </source>
</evidence>
<evidence type="ECO:0000269" key="6">
    <source>
    </source>
</evidence>
<evidence type="ECO:0000303" key="7">
    <source>
    </source>
</evidence>
<evidence type="ECO:0000305" key="8"/>
<evidence type="ECO:0000312" key="9">
    <source>
        <dbReference type="Araport" id="AT3G59660"/>
    </source>
</evidence>
<evidence type="ECO:0000312" key="10">
    <source>
        <dbReference type="EMBL" id="AAL32719.1"/>
    </source>
</evidence>
<evidence type="ECO:0000312" key="11">
    <source>
        <dbReference type="EMBL" id="CAB75463.1"/>
    </source>
</evidence>
<organism evidence="10">
    <name type="scientific">Arabidopsis thaliana</name>
    <name type="common">Mouse-ear cress</name>
    <dbReference type="NCBI Taxonomy" id="3702"/>
    <lineage>
        <taxon>Eukaryota</taxon>
        <taxon>Viridiplantae</taxon>
        <taxon>Streptophyta</taxon>
        <taxon>Embryophyta</taxon>
        <taxon>Tracheophyta</taxon>
        <taxon>Spermatophyta</taxon>
        <taxon>Magnoliopsida</taxon>
        <taxon>eudicotyledons</taxon>
        <taxon>Gunneridae</taxon>
        <taxon>Pentapetalae</taxon>
        <taxon>rosids</taxon>
        <taxon>malvids</taxon>
        <taxon>Brassicales</taxon>
        <taxon>Brassicaceae</taxon>
        <taxon>Camelineae</taxon>
        <taxon>Arabidopsis</taxon>
    </lineage>
</organism>
<sequence>MVQSAVEVLLPSAWEIEVAVVASVFLIASYWLFAYRGGGDDDVVGVGFDRSRLMQNLDSGDAFDKDKIGHLRGDTQTNAAYIVKVELLAAKNLIGANLNGTSDPYAIVNCGSEKRFSSMVPGSRNPMWGEEFNFPTDELPAKINVTIHDWDIIWKSTVLGSVTINVEREGQTGPVWHSLDSPSGQVCLNINAIKLPVNAPRAVTGYAGAGRRRVTLDQQGPTIVHQKPGPLQTIFDLLPDEVVEHSYSCALERSFLYHGRMYVSAWHICFHSNVFSKQMKVVVPLGDIDEIRRSQHALINPAITIILRMGAGGHGVPPLGTPDGRVRYKFASFWNRNHTLKALQRAVNNYHAMLEVEKKERAQSALRAHSSSVKGGGKVQVKAPEDTAAVPVKFQAFIKEEVLVNIYNDVFASTPEQVLNVLLADDSTYTNEYRSARKDKNLNIEPWHTAEEYDGQVREIKFRSICNSPMCPPDTAVTEWQHVVLSPDKKVLVFETVQQPHDVPFGSYFEVHCRWRLEAKDETSSVIDIRVGVHFKKWCLMQSKIKAGAIDEYKKEVEVMLEVALSYLKSHSSSSSHGDIDKSALSSPTPENIS</sequence>
<dbReference type="EMBL" id="AL138659">
    <property type="protein sequence ID" value="CAB75463.1"/>
    <property type="status" value="ALT_SEQ"/>
    <property type="molecule type" value="Genomic_DNA"/>
</dbReference>
<dbReference type="EMBL" id="CP002686">
    <property type="protein sequence ID" value="AEE79952.1"/>
    <property type="molecule type" value="Genomic_DNA"/>
</dbReference>
<dbReference type="EMBL" id="AY062641">
    <property type="protein sequence ID" value="AAL32719.1"/>
    <property type="molecule type" value="mRNA"/>
</dbReference>
<dbReference type="EMBL" id="BT008357">
    <property type="protein sequence ID" value="AAP37716.1"/>
    <property type="molecule type" value="mRNA"/>
</dbReference>
<dbReference type="PIR" id="T49307">
    <property type="entry name" value="T49307"/>
</dbReference>
<dbReference type="RefSeq" id="NP_191525.2">
    <property type="nucleotide sequence ID" value="NM_115828.5"/>
</dbReference>
<dbReference type="SMR" id="Q8W4D4"/>
<dbReference type="FunCoup" id="Q8W4D4">
    <property type="interactions" value="1149"/>
</dbReference>
<dbReference type="STRING" id="3702.Q8W4D4"/>
<dbReference type="iPTMnet" id="Q8W4D4"/>
<dbReference type="PaxDb" id="3702-AT3G59660.1"/>
<dbReference type="ProteomicsDB" id="240808"/>
<dbReference type="EnsemblPlants" id="AT3G59660.1">
    <property type="protein sequence ID" value="AT3G59660.1"/>
    <property type="gene ID" value="AT3G59660"/>
</dbReference>
<dbReference type="GeneID" id="825135"/>
<dbReference type="Gramene" id="AT3G59660.1">
    <property type="protein sequence ID" value="AT3G59660.1"/>
    <property type="gene ID" value="AT3G59660"/>
</dbReference>
<dbReference type="KEGG" id="ath:AT3G59660"/>
<dbReference type="Araport" id="AT3G59660"/>
<dbReference type="TAIR" id="AT3G59660">
    <property type="gene designation" value="BAGP1"/>
</dbReference>
<dbReference type="eggNOG" id="KOG1032">
    <property type="taxonomic scope" value="Eukaryota"/>
</dbReference>
<dbReference type="HOGENOM" id="CLU_028706_1_0_1"/>
<dbReference type="InParanoid" id="Q8W4D4"/>
<dbReference type="OMA" id="LIPSWWE"/>
<dbReference type="OrthoDB" id="67700at2759"/>
<dbReference type="PhylomeDB" id="Q8W4D4"/>
<dbReference type="PRO" id="PR:Q8W4D4"/>
<dbReference type="Proteomes" id="UP000006548">
    <property type="component" value="Chromosome 3"/>
</dbReference>
<dbReference type="ExpressionAtlas" id="Q8W4D4">
    <property type="expression patterns" value="baseline and differential"/>
</dbReference>
<dbReference type="GO" id="GO:0016020">
    <property type="term" value="C:membrane"/>
    <property type="evidence" value="ECO:0007669"/>
    <property type="project" value="UniProtKB-SubCell"/>
</dbReference>
<dbReference type="GO" id="GO:0050832">
    <property type="term" value="P:defense response to fungus"/>
    <property type="evidence" value="ECO:0000315"/>
    <property type="project" value="TAIR"/>
</dbReference>
<dbReference type="CDD" id="cd00030">
    <property type="entry name" value="C2"/>
    <property type="match status" value="1"/>
</dbReference>
<dbReference type="CDD" id="cd13219">
    <property type="entry name" value="PH-GRAM_C2-GRAM"/>
    <property type="match status" value="1"/>
</dbReference>
<dbReference type="FunFam" id="2.30.29.30:FF:000265">
    <property type="entry name" value="BAG-associated GRAM protein 1 isoform X2"/>
    <property type="match status" value="1"/>
</dbReference>
<dbReference type="FunFam" id="2.60.40.150:FF:000267">
    <property type="entry name" value="C2 domain-containing protein / GRAM domain-containing protein"/>
    <property type="match status" value="1"/>
</dbReference>
<dbReference type="Gene3D" id="2.60.40.150">
    <property type="entry name" value="C2 domain"/>
    <property type="match status" value="1"/>
</dbReference>
<dbReference type="Gene3D" id="2.30.29.30">
    <property type="entry name" value="Pleckstrin-homology domain (PH domain)/Phosphotyrosine-binding domain (PTB)"/>
    <property type="match status" value="1"/>
</dbReference>
<dbReference type="InterPro" id="IPR044655">
    <property type="entry name" value="BAGP1-like"/>
</dbReference>
<dbReference type="InterPro" id="IPR000008">
    <property type="entry name" value="C2_dom"/>
</dbReference>
<dbReference type="InterPro" id="IPR035892">
    <property type="entry name" value="C2_domain_sf"/>
</dbReference>
<dbReference type="InterPro" id="IPR004182">
    <property type="entry name" value="GRAM"/>
</dbReference>
<dbReference type="InterPro" id="IPR011993">
    <property type="entry name" value="PH-like_dom_sf"/>
</dbReference>
<dbReference type="InterPro" id="IPR031968">
    <property type="entry name" value="VASt"/>
</dbReference>
<dbReference type="PANTHER" id="PTHR47038">
    <property type="entry name" value="BAG-ASSOCIATED GRAM PROTEIN 1"/>
    <property type="match status" value="1"/>
</dbReference>
<dbReference type="PANTHER" id="PTHR47038:SF1">
    <property type="entry name" value="BAG-ASSOCIATED GRAM PROTEIN 1"/>
    <property type="match status" value="1"/>
</dbReference>
<dbReference type="Pfam" id="PF00168">
    <property type="entry name" value="C2"/>
    <property type="match status" value="1"/>
</dbReference>
<dbReference type="Pfam" id="PF02893">
    <property type="entry name" value="GRAM"/>
    <property type="match status" value="1"/>
</dbReference>
<dbReference type="Pfam" id="PF16016">
    <property type="entry name" value="VASt"/>
    <property type="match status" value="1"/>
</dbReference>
<dbReference type="SMART" id="SM00239">
    <property type="entry name" value="C2"/>
    <property type="match status" value="1"/>
</dbReference>
<dbReference type="SMART" id="SM00568">
    <property type="entry name" value="GRAM"/>
    <property type="match status" value="1"/>
</dbReference>
<dbReference type="SUPFAM" id="SSF49562">
    <property type="entry name" value="C2 domain (Calcium/lipid-binding domain, CaLB)"/>
    <property type="match status" value="1"/>
</dbReference>
<dbReference type="PROSITE" id="PS50004">
    <property type="entry name" value="C2"/>
    <property type="match status" value="1"/>
</dbReference>
<dbReference type="PROSITE" id="PS51778">
    <property type="entry name" value="VAST"/>
    <property type="match status" value="1"/>
</dbReference>
<keyword id="KW-0472">Membrane</keyword>
<keyword id="KW-1185">Reference proteome</keyword>
<keyword id="KW-0812">Transmembrane</keyword>
<keyword id="KW-1133">Transmembrane helix</keyword>